<dbReference type="EC" id="7.5.2.10" evidence="1"/>
<dbReference type="EMBL" id="CP000036">
    <property type="protein sequence ID" value="ABB68057.1"/>
    <property type="molecule type" value="Genomic_DNA"/>
</dbReference>
<dbReference type="RefSeq" id="WP_001146509.1">
    <property type="nucleotide sequence ID" value="NC_007613.1"/>
</dbReference>
<dbReference type="SMR" id="Q31V51"/>
<dbReference type="GeneID" id="75173767"/>
<dbReference type="KEGG" id="sbo:SBO_3575"/>
<dbReference type="HOGENOM" id="CLU_000604_92_3_6"/>
<dbReference type="Proteomes" id="UP000007067">
    <property type="component" value="Chromosome"/>
</dbReference>
<dbReference type="GO" id="GO:0005886">
    <property type="term" value="C:plasma membrane"/>
    <property type="evidence" value="ECO:0007669"/>
    <property type="project" value="UniProtKB-SubCell"/>
</dbReference>
<dbReference type="GO" id="GO:0015614">
    <property type="term" value="F:ABC-type D-xylose transporter activity"/>
    <property type="evidence" value="ECO:0007669"/>
    <property type="project" value="UniProtKB-EC"/>
</dbReference>
<dbReference type="GO" id="GO:0005524">
    <property type="term" value="F:ATP binding"/>
    <property type="evidence" value="ECO:0007669"/>
    <property type="project" value="UniProtKB-KW"/>
</dbReference>
<dbReference type="GO" id="GO:0016887">
    <property type="term" value="F:ATP hydrolysis activity"/>
    <property type="evidence" value="ECO:0007669"/>
    <property type="project" value="InterPro"/>
</dbReference>
<dbReference type="CDD" id="cd03216">
    <property type="entry name" value="ABC_Carb_Monos_I"/>
    <property type="match status" value="1"/>
</dbReference>
<dbReference type="CDD" id="cd03215">
    <property type="entry name" value="ABC_Carb_Monos_II"/>
    <property type="match status" value="1"/>
</dbReference>
<dbReference type="FunFam" id="3.40.50.300:FF:000126">
    <property type="entry name" value="Galactose/methyl galactoside import ATP-binding protein MglA"/>
    <property type="match status" value="1"/>
</dbReference>
<dbReference type="FunFam" id="3.40.50.300:FF:000127">
    <property type="entry name" value="Ribose import ATP-binding protein RbsA"/>
    <property type="match status" value="1"/>
</dbReference>
<dbReference type="Gene3D" id="3.40.50.300">
    <property type="entry name" value="P-loop containing nucleotide triphosphate hydrolases"/>
    <property type="match status" value="2"/>
</dbReference>
<dbReference type="InterPro" id="IPR003593">
    <property type="entry name" value="AAA+_ATPase"/>
</dbReference>
<dbReference type="InterPro" id="IPR050107">
    <property type="entry name" value="ABC_carbohydrate_import_ATPase"/>
</dbReference>
<dbReference type="InterPro" id="IPR003439">
    <property type="entry name" value="ABC_transporter-like_ATP-bd"/>
</dbReference>
<dbReference type="InterPro" id="IPR017871">
    <property type="entry name" value="ABC_transporter-like_CS"/>
</dbReference>
<dbReference type="InterPro" id="IPR013455">
    <property type="entry name" value="ABC_transptr_XylG"/>
</dbReference>
<dbReference type="InterPro" id="IPR027417">
    <property type="entry name" value="P-loop_NTPase"/>
</dbReference>
<dbReference type="NCBIfam" id="NF010069">
    <property type="entry name" value="PRK13549.1"/>
    <property type="match status" value="1"/>
</dbReference>
<dbReference type="NCBIfam" id="TIGR02633">
    <property type="entry name" value="xylG"/>
    <property type="match status" value="1"/>
</dbReference>
<dbReference type="PANTHER" id="PTHR43790">
    <property type="entry name" value="CARBOHYDRATE TRANSPORT ATP-BINDING PROTEIN MG119-RELATED"/>
    <property type="match status" value="1"/>
</dbReference>
<dbReference type="PANTHER" id="PTHR43790:SF1">
    <property type="entry name" value="XYLOSE IMPORT ATP-BINDING PROTEIN XYLG"/>
    <property type="match status" value="1"/>
</dbReference>
<dbReference type="Pfam" id="PF00005">
    <property type="entry name" value="ABC_tran"/>
    <property type="match status" value="2"/>
</dbReference>
<dbReference type="SMART" id="SM00382">
    <property type="entry name" value="AAA"/>
    <property type="match status" value="2"/>
</dbReference>
<dbReference type="SUPFAM" id="SSF52540">
    <property type="entry name" value="P-loop containing nucleoside triphosphate hydrolases"/>
    <property type="match status" value="2"/>
</dbReference>
<dbReference type="PROSITE" id="PS00211">
    <property type="entry name" value="ABC_TRANSPORTER_1"/>
    <property type="match status" value="1"/>
</dbReference>
<dbReference type="PROSITE" id="PS50893">
    <property type="entry name" value="ABC_TRANSPORTER_2"/>
    <property type="match status" value="2"/>
</dbReference>
<dbReference type="PROSITE" id="PS51280">
    <property type="entry name" value="XYLG"/>
    <property type="match status" value="1"/>
</dbReference>
<sequence>MPYLLEMKNITKTFGSVKAIDNVSLRLNAGEIVSLCGENGSGKSTLMKVLCGIYPHGSYEGEIIFAGEEIQASHIRDTERKGIAIIHQELALVKELTVLENIFLGNEITHNGIMDYDLMTLRCQKLLAQVSLSISPDTRVGDLGLGQQQLVEIAKALNKQVRLLILDEPTASLTEQETSVLLDIIRDLQQHGIACIYISHKLNEVKAISDTICVIRDGQHIGTRDAAGMSEDDIITMMVGRELTALYPNEPHTTGDEILRIEHLTAWHPVNRHIKRVNDVSFSLKRGEILGIAGLVGAGRTETIQCLFGVWPGQWEGKIYIDGKQVDIRNCQQAIAQGIAMVPEDRKRDGIVPVMAVGKNITLAALNKFTGGISQLDDAAEQKCILESIQQLKVKTSSPDLAIGRLSGGNQQKAILARCLLLNPRILILDEPTRGIDIGAKYEIYKLINQLVQQGIAVIVISSELPEVLGLSDRVLVMHEGKLKANLINHNLTQEQVMEAALRSEHHVEKQSV</sequence>
<protein>
    <recommendedName>
        <fullName evidence="1">Xylose import ATP-binding protein XylG</fullName>
        <ecNumber evidence="1">7.5.2.10</ecNumber>
    </recommendedName>
</protein>
<proteinExistence type="inferred from homology"/>
<feature type="chain" id="PRO_0000271514" description="Xylose import ATP-binding protein XylG">
    <location>
        <begin position="1"/>
        <end position="513"/>
    </location>
</feature>
<feature type="domain" description="ABC transporter 1" evidence="1">
    <location>
        <begin position="5"/>
        <end position="242"/>
    </location>
</feature>
<feature type="domain" description="ABC transporter 2" evidence="1">
    <location>
        <begin position="259"/>
        <end position="505"/>
    </location>
</feature>
<feature type="binding site" evidence="1">
    <location>
        <begin position="37"/>
        <end position="44"/>
    </location>
    <ligand>
        <name>ATP</name>
        <dbReference type="ChEBI" id="CHEBI:30616"/>
    </ligand>
</feature>
<accession>Q31V51</accession>
<keyword id="KW-0067">ATP-binding</keyword>
<keyword id="KW-0997">Cell inner membrane</keyword>
<keyword id="KW-1003">Cell membrane</keyword>
<keyword id="KW-0472">Membrane</keyword>
<keyword id="KW-0547">Nucleotide-binding</keyword>
<keyword id="KW-0677">Repeat</keyword>
<keyword id="KW-0762">Sugar transport</keyword>
<keyword id="KW-1278">Translocase</keyword>
<keyword id="KW-0813">Transport</keyword>
<evidence type="ECO:0000255" key="1">
    <source>
        <dbReference type="HAMAP-Rule" id="MF_01722"/>
    </source>
</evidence>
<organism>
    <name type="scientific">Shigella boydii serotype 4 (strain Sb227)</name>
    <dbReference type="NCBI Taxonomy" id="300268"/>
    <lineage>
        <taxon>Bacteria</taxon>
        <taxon>Pseudomonadati</taxon>
        <taxon>Pseudomonadota</taxon>
        <taxon>Gammaproteobacteria</taxon>
        <taxon>Enterobacterales</taxon>
        <taxon>Enterobacteriaceae</taxon>
        <taxon>Shigella</taxon>
    </lineage>
</organism>
<comment type="function">
    <text evidence="1">Part of the ABC transporter complex XylFGH involved in xylose import. Responsible for energy coupling to the transport system.</text>
</comment>
<comment type="catalytic activity">
    <reaction evidence="1">
        <text>D-xylose(out) + ATP + H2O = D-xylose(in) + ADP + phosphate + H(+)</text>
        <dbReference type="Rhea" id="RHEA:29899"/>
        <dbReference type="ChEBI" id="CHEBI:15377"/>
        <dbReference type="ChEBI" id="CHEBI:15378"/>
        <dbReference type="ChEBI" id="CHEBI:30616"/>
        <dbReference type="ChEBI" id="CHEBI:43474"/>
        <dbReference type="ChEBI" id="CHEBI:53455"/>
        <dbReference type="ChEBI" id="CHEBI:456216"/>
        <dbReference type="EC" id="7.5.2.10"/>
    </reaction>
</comment>
<comment type="subunit">
    <text evidence="1">The complex is composed of two ATP-binding proteins (XylG), two transmembrane proteins (XylH) and a solute-binding protein (XylF).</text>
</comment>
<comment type="subcellular location">
    <subcellularLocation>
        <location evidence="1">Cell inner membrane</location>
        <topology evidence="1">Peripheral membrane protein</topology>
    </subcellularLocation>
</comment>
<comment type="similarity">
    <text evidence="1">Belongs to the ABC transporter superfamily. Xylose importer (TC 3.A.1.2.4) family.</text>
</comment>
<name>XYLG_SHIBS</name>
<gene>
    <name evidence="1" type="primary">xylG</name>
    <name type="ordered locus">SBO_3575</name>
</gene>
<reference key="1">
    <citation type="journal article" date="2005" name="Nucleic Acids Res.">
        <title>Genome dynamics and diversity of Shigella species, the etiologic agents of bacillary dysentery.</title>
        <authorList>
            <person name="Yang F."/>
            <person name="Yang J."/>
            <person name="Zhang X."/>
            <person name="Chen L."/>
            <person name="Jiang Y."/>
            <person name="Yan Y."/>
            <person name="Tang X."/>
            <person name="Wang J."/>
            <person name="Xiong Z."/>
            <person name="Dong J."/>
            <person name="Xue Y."/>
            <person name="Zhu Y."/>
            <person name="Xu X."/>
            <person name="Sun L."/>
            <person name="Chen S."/>
            <person name="Nie H."/>
            <person name="Peng J."/>
            <person name="Xu J."/>
            <person name="Wang Y."/>
            <person name="Yuan Z."/>
            <person name="Wen Y."/>
            <person name="Yao Z."/>
            <person name="Shen Y."/>
            <person name="Qiang B."/>
            <person name="Hou Y."/>
            <person name="Yu J."/>
            <person name="Jin Q."/>
        </authorList>
    </citation>
    <scope>NUCLEOTIDE SEQUENCE [LARGE SCALE GENOMIC DNA]</scope>
    <source>
        <strain>Sb227</strain>
    </source>
</reference>